<organism>
    <name type="scientific">Arabidopsis thaliana</name>
    <name type="common">Mouse-ear cress</name>
    <dbReference type="NCBI Taxonomy" id="3702"/>
    <lineage>
        <taxon>Eukaryota</taxon>
        <taxon>Viridiplantae</taxon>
        <taxon>Streptophyta</taxon>
        <taxon>Embryophyta</taxon>
        <taxon>Tracheophyta</taxon>
        <taxon>Spermatophyta</taxon>
        <taxon>Magnoliopsida</taxon>
        <taxon>eudicotyledons</taxon>
        <taxon>Gunneridae</taxon>
        <taxon>Pentapetalae</taxon>
        <taxon>rosids</taxon>
        <taxon>malvids</taxon>
        <taxon>Brassicales</taxon>
        <taxon>Brassicaceae</taxon>
        <taxon>Camelineae</taxon>
        <taxon>Arabidopsis</taxon>
    </lineage>
</organism>
<feature type="chain" id="PRO_0000363507" description="Putative pentatricopeptide repeat-containing protein At5g08490">
    <location>
        <begin position="1"/>
        <end position="849"/>
    </location>
</feature>
<feature type="repeat" description="PPR 1">
    <location>
        <begin position="20"/>
        <end position="54"/>
    </location>
</feature>
<feature type="repeat" description="PPR 2">
    <location>
        <begin position="55"/>
        <end position="89"/>
    </location>
</feature>
<feature type="repeat" description="PPR 3">
    <location>
        <begin position="121"/>
        <end position="155"/>
    </location>
</feature>
<feature type="repeat" description="PPR 4">
    <location>
        <begin position="156"/>
        <end position="187"/>
    </location>
</feature>
<feature type="repeat" description="PPR 5">
    <location>
        <begin position="188"/>
        <end position="222"/>
    </location>
</feature>
<feature type="repeat" description="PPR 6">
    <location>
        <begin position="223"/>
        <end position="260"/>
    </location>
</feature>
<feature type="repeat" description="PPR 7">
    <location>
        <begin position="262"/>
        <end position="296"/>
    </location>
</feature>
<feature type="repeat" description="PPR 8">
    <location>
        <begin position="297"/>
        <end position="327"/>
    </location>
</feature>
<feature type="repeat" description="PPR 9">
    <location>
        <begin position="329"/>
        <end position="363"/>
    </location>
</feature>
<feature type="repeat" description="PPR 10">
    <location>
        <begin position="365"/>
        <end position="399"/>
    </location>
</feature>
<feature type="repeat" description="PPR 11">
    <location>
        <begin position="400"/>
        <end position="430"/>
    </location>
</feature>
<feature type="repeat" description="PPR 12">
    <location>
        <begin position="431"/>
        <end position="465"/>
    </location>
</feature>
<feature type="repeat" description="PPR 13">
    <location>
        <begin position="469"/>
        <end position="499"/>
    </location>
</feature>
<feature type="repeat" description="PPR 14">
    <location>
        <begin position="501"/>
        <end position="531"/>
    </location>
</feature>
<feature type="repeat" description="PPR 15">
    <location>
        <begin position="532"/>
        <end position="566"/>
    </location>
</feature>
<feature type="repeat" description="PPR 16">
    <location>
        <begin position="567"/>
        <end position="597"/>
    </location>
</feature>
<feature type="repeat" description="PPR 17">
    <location>
        <begin position="601"/>
        <end position="631"/>
    </location>
</feature>
<feature type="repeat" description="PPR 18">
    <location>
        <begin position="632"/>
        <end position="666"/>
    </location>
</feature>
<feature type="repeat" description="PPR 19">
    <location>
        <begin position="667"/>
        <end position="702"/>
    </location>
</feature>
<feature type="repeat" description="PPR 20">
    <location>
        <begin position="703"/>
        <end position="733"/>
    </location>
</feature>
<feature type="region of interest" description="Type E motif">
    <location>
        <begin position="738"/>
        <end position="813"/>
    </location>
</feature>
<feature type="region of interest" description="Type E(+) motif">
    <location>
        <begin position="814"/>
        <end position="844"/>
    </location>
</feature>
<sequence length="849" mass="94488">MGPLRQFVQNFRLLSGFGTDHRVFLDVVKACASVSDLTSGRALHGCVFKLGHIACSEVSKSVLNMYAKCRRMDDCQKMFRQMDSLDPVVWNIVLTGLSVSCGRETMRFFKAMHFADEPKPSSVTFAIVLPLCVRLGDSYNGKSMHSYIIKAGLEKDTLVGNALVSMYAKFGFIFPDAYTAFDGIADKDVVSWNAIIAGFSENNMMADAFRSFCLMLKEPTEPNYATIANVLPVCASMDKNIACRSGRQIHSYVVQRSWLQTHVFVCNSLVSFYLRVGRIEEAASLFTRMGSKDLVSWNVVIAGYASNCEWFKAFQLFHNLVHKGDVSPDSVTIISILPVCAQLTDLASGKEIHSYILRHSYLLEDTSVGNALISFYARFGDTSAAYWAFSLMSTKDIISWNAILDAFADSPKQFQFLNLLHHLLNEAITLDSVTILSLLKFCINVQGIGKVKEVHGYSVKAGLLHDEEEPKLGNALLDAYAKCGNVEYAHKIFLGLSERRTLVSYNSLLSGYVNSGSHDDAQMLFTEMSTTDLTTWSLMVRIYAESCCPNEAIGVFREIQARGMRPNTVTIMNLLPVCAQLASLHLVRQCHGYIIRGGLGDIRLKGTLLDVYAKCGSLKHAYSVFQSDARRDLVMFTAMVAGYAVHGRGKEALMIYSHMTESNIKPDHVFITTMLTACCHAGLIQDGLQIYDSIRTVHGMKPTMEQYACAVDLIARGGRLDDAYSFVTQMPVEPNANIWGTLLRACTTYNRMDLGHSVANHLLQAESDDTGNHVLISNMYAADAKWEGVMELRNLMKKKEMKKPAGCSWLEVDGQRNVFVSGDCSHPRRDSIFDLVNALYLQMKEPVVF</sequence>
<reference key="1">
    <citation type="journal article" date="1997" name="DNA Res.">
        <title>Structural analysis of Arabidopsis thaliana chromosome 5. II. Sequence features of the regions of 1,044,062 bp covered by thirteen physically assigned P1 clones.</title>
        <authorList>
            <person name="Kotani H."/>
            <person name="Nakamura Y."/>
            <person name="Sato S."/>
            <person name="Kaneko T."/>
            <person name="Asamizu E."/>
            <person name="Miyajima N."/>
            <person name="Tabata S."/>
        </authorList>
    </citation>
    <scope>NUCLEOTIDE SEQUENCE [LARGE SCALE GENOMIC DNA]</scope>
    <source>
        <strain>cv. Columbia</strain>
    </source>
</reference>
<reference key="2">
    <citation type="journal article" date="2017" name="Plant J.">
        <title>Araport11: a complete reannotation of the Arabidopsis thaliana reference genome.</title>
        <authorList>
            <person name="Cheng C.Y."/>
            <person name="Krishnakumar V."/>
            <person name="Chan A.P."/>
            <person name="Thibaud-Nissen F."/>
            <person name="Schobel S."/>
            <person name="Town C.D."/>
        </authorList>
    </citation>
    <scope>GENOME REANNOTATION</scope>
    <source>
        <strain>cv. Columbia</strain>
    </source>
</reference>
<reference key="3">
    <citation type="journal article" date="2000" name="Plant Mol. Biol.">
        <title>In Arabidopsis thaliana, 1% of the genome codes for a novel protein family unique to plants.</title>
        <authorList>
            <person name="Aubourg S."/>
            <person name="Boudet N."/>
            <person name="Kreis M."/>
            <person name="Lecharny A."/>
        </authorList>
    </citation>
    <scope>GENE FAMILY</scope>
</reference>
<reference key="4">
    <citation type="journal article" date="2004" name="Plant Cell">
        <title>Genome-wide analysis of Arabidopsis pentatricopeptide repeat proteins reveals their essential role in organelle biogenesis.</title>
        <authorList>
            <person name="Lurin C."/>
            <person name="Andres C."/>
            <person name="Aubourg S."/>
            <person name="Bellaoui M."/>
            <person name="Bitton F."/>
            <person name="Bruyere C."/>
            <person name="Caboche M."/>
            <person name="Debast C."/>
            <person name="Gualberto J."/>
            <person name="Hoffmann B."/>
            <person name="Lecharny A."/>
            <person name="Le Ret M."/>
            <person name="Martin-Magniette M.-L."/>
            <person name="Mireau H."/>
            <person name="Peeters N."/>
            <person name="Renou J.-P."/>
            <person name="Szurek B."/>
            <person name="Taconnat L."/>
            <person name="Small I."/>
        </authorList>
    </citation>
    <scope>GENE FAMILY</scope>
</reference>
<name>PP370_ARATH</name>
<keyword id="KW-1185">Reference proteome</keyword>
<keyword id="KW-0677">Repeat</keyword>
<proteinExistence type="inferred from homology"/>
<evidence type="ECO:0000305" key="1"/>
<comment type="similarity">
    <text evidence="1">Belongs to the PPR family. PCMP-E subfamily.</text>
</comment>
<comment type="online information" name="Pentatricopeptide repeat proteins">
    <link uri="https://ppr.plantenergy.uwa.edu.au"/>
</comment>
<accession>Q9FNN9</accession>
<dbReference type="EMBL" id="AB006697">
    <property type="protein sequence ID" value="BAB09998.1"/>
    <property type="molecule type" value="Genomic_DNA"/>
</dbReference>
<dbReference type="EMBL" id="CP002688">
    <property type="protein sequence ID" value="AED91310.1"/>
    <property type="molecule type" value="Genomic_DNA"/>
</dbReference>
<dbReference type="EMBL" id="CP002688">
    <property type="protein sequence ID" value="ANM70124.1"/>
    <property type="molecule type" value="Genomic_DNA"/>
</dbReference>
<dbReference type="EMBL" id="CP002688">
    <property type="protein sequence ID" value="ANM70126.1"/>
    <property type="molecule type" value="Genomic_DNA"/>
</dbReference>
<dbReference type="RefSeq" id="NP_001318512.1">
    <property type="nucleotide sequence ID" value="NM_001343008.1"/>
</dbReference>
<dbReference type="RefSeq" id="NP_001331757.1">
    <property type="nucleotide sequence ID" value="NM_001343010.1"/>
</dbReference>
<dbReference type="RefSeq" id="NP_196466.1">
    <property type="nucleotide sequence ID" value="NM_120934.2"/>
</dbReference>
<dbReference type="SMR" id="Q9FNN9"/>
<dbReference type="FunCoup" id="Q9FNN9">
    <property type="interactions" value="497"/>
</dbReference>
<dbReference type="STRING" id="3702.Q9FNN9"/>
<dbReference type="PaxDb" id="3702-AT5G08490.1"/>
<dbReference type="EnsemblPlants" id="AT5G08490.1">
    <property type="protein sequence ID" value="AT5G08490.1"/>
    <property type="gene ID" value="AT5G08490"/>
</dbReference>
<dbReference type="EnsemblPlants" id="AT5G08490.3">
    <property type="protein sequence ID" value="AT5G08490.3"/>
    <property type="gene ID" value="AT5G08490"/>
</dbReference>
<dbReference type="EnsemblPlants" id="AT5G08490.8">
    <property type="protein sequence ID" value="AT5G08490.8"/>
    <property type="gene ID" value="AT5G08490"/>
</dbReference>
<dbReference type="GeneID" id="830748"/>
<dbReference type="Gramene" id="AT5G08490.1">
    <property type="protein sequence ID" value="AT5G08490.1"/>
    <property type="gene ID" value="AT5G08490"/>
</dbReference>
<dbReference type="Gramene" id="AT5G08490.3">
    <property type="protein sequence ID" value="AT5G08490.3"/>
    <property type="gene ID" value="AT5G08490"/>
</dbReference>
<dbReference type="Gramene" id="AT5G08490.8">
    <property type="protein sequence ID" value="AT5G08490.8"/>
    <property type="gene ID" value="AT5G08490"/>
</dbReference>
<dbReference type="KEGG" id="ath:AT5G08490"/>
<dbReference type="Araport" id="AT5G08490"/>
<dbReference type="TAIR" id="AT5G08490">
    <property type="gene designation" value="SLG1"/>
</dbReference>
<dbReference type="eggNOG" id="KOG4197">
    <property type="taxonomic scope" value="Eukaryota"/>
</dbReference>
<dbReference type="HOGENOM" id="CLU_002706_15_7_1"/>
<dbReference type="InParanoid" id="Q9FNN9"/>
<dbReference type="PhylomeDB" id="Q9FNN9"/>
<dbReference type="PRO" id="PR:Q9FNN9"/>
<dbReference type="Proteomes" id="UP000006548">
    <property type="component" value="Chromosome 5"/>
</dbReference>
<dbReference type="ExpressionAtlas" id="Q9FNN9">
    <property type="expression patterns" value="baseline and differential"/>
</dbReference>
<dbReference type="GO" id="GO:0005739">
    <property type="term" value="C:mitochondrion"/>
    <property type="evidence" value="ECO:0000314"/>
    <property type="project" value="TAIR"/>
</dbReference>
<dbReference type="GO" id="GO:0003723">
    <property type="term" value="F:RNA binding"/>
    <property type="evidence" value="ECO:0007669"/>
    <property type="project" value="InterPro"/>
</dbReference>
<dbReference type="GO" id="GO:0080156">
    <property type="term" value="P:mitochondrial mRNA modification"/>
    <property type="evidence" value="ECO:0000315"/>
    <property type="project" value="TAIR"/>
</dbReference>
<dbReference type="GO" id="GO:0009737">
    <property type="term" value="P:response to abscisic acid"/>
    <property type="evidence" value="ECO:0000315"/>
    <property type="project" value="TAIR"/>
</dbReference>
<dbReference type="GO" id="GO:0009414">
    <property type="term" value="P:response to water deprivation"/>
    <property type="evidence" value="ECO:0000315"/>
    <property type="project" value="TAIR"/>
</dbReference>
<dbReference type="FunFam" id="1.25.40.10:FF:000781">
    <property type="entry name" value="Pentatricopeptide repeat-containing protein"/>
    <property type="match status" value="1"/>
</dbReference>
<dbReference type="FunFam" id="1.25.40.10:FF:000361">
    <property type="entry name" value="Pentatricopeptide repeat-containing protein chloroplastic"/>
    <property type="match status" value="1"/>
</dbReference>
<dbReference type="FunFam" id="1.25.40.10:FF:000090">
    <property type="entry name" value="Pentatricopeptide repeat-containing protein, chloroplastic"/>
    <property type="match status" value="1"/>
</dbReference>
<dbReference type="FunFam" id="1.25.40.10:FF:000412">
    <property type="entry name" value="Putative pentatricopeptide repeat-containing protein"/>
    <property type="match status" value="1"/>
</dbReference>
<dbReference type="FunFam" id="1.25.40.10:FF:000724">
    <property type="entry name" value="Putative pentatricopeptide repeat-containing protein"/>
    <property type="match status" value="1"/>
</dbReference>
<dbReference type="FunFam" id="1.25.40.10:FF:002038">
    <property type="entry name" value="Putative pentatricopeptide repeat-containing protein At5g08490"/>
    <property type="match status" value="1"/>
</dbReference>
<dbReference type="Gene3D" id="1.25.40.10">
    <property type="entry name" value="Tetratricopeptide repeat domain"/>
    <property type="match status" value="6"/>
</dbReference>
<dbReference type="InterPro" id="IPR046848">
    <property type="entry name" value="E_motif"/>
</dbReference>
<dbReference type="InterPro" id="IPR002885">
    <property type="entry name" value="Pentatricopeptide_rpt"/>
</dbReference>
<dbReference type="InterPro" id="IPR046960">
    <property type="entry name" value="PPR_At4g14850-like_plant"/>
</dbReference>
<dbReference type="InterPro" id="IPR011990">
    <property type="entry name" value="TPR-like_helical_dom_sf"/>
</dbReference>
<dbReference type="NCBIfam" id="TIGR00756">
    <property type="entry name" value="PPR"/>
    <property type="match status" value="5"/>
</dbReference>
<dbReference type="PANTHER" id="PTHR47926">
    <property type="entry name" value="PENTATRICOPEPTIDE REPEAT-CONTAINING PROTEIN"/>
    <property type="match status" value="1"/>
</dbReference>
<dbReference type="PANTHER" id="PTHR47926:SF347">
    <property type="entry name" value="PENTATRICOPEPTIDE REPEAT-CONTAINING PROTEIN"/>
    <property type="match status" value="1"/>
</dbReference>
<dbReference type="Pfam" id="PF20431">
    <property type="entry name" value="E_motif"/>
    <property type="match status" value="1"/>
</dbReference>
<dbReference type="Pfam" id="PF01535">
    <property type="entry name" value="PPR"/>
    <property type="match status" value="8"/>
</dbReference>
<dbReference type="Pfam" id="PF13041">
    <property type="entry name" value="PPR_2"/>
    <property type="match status" value="2"/>
</dbReference>
<dbReference type="PROSITE" id="PS51375">
    <property type="entry name" value="PPR"/>
    <property type="match status" value="17"/>
</dbReference>
<gene>
    <name type="primary">PCMP-E32</name>
    <name type="ordered locus">At5g08490</name>
    <name type="ORF">F8L15.18</name>
</gene>
<protein>
    <recommendedName>
        <fullName>Putative pentatricopeptide repeat-containing protein At5g08490</fullName>
    </recommendedName>
</protein>